<dbReference type="EMBL" id="FJ810855">
    <property type="protein sequence ID" value="ACU82853.1"/>
    <property type="molecule type" value="mRNA"/>
</dbReference>
<dbReference type="RefSeq" id="NP_001274248.1">
    <property type="nucleotide sequence ID" value="NM_001287319.1"/>
</dbReference>
<dbReference type="RefSeq" id="XP_045217145.1">
    <property type="nucleotide sequence ID" value="XM_045361210.2"/>
</dbReference>
<dbReference type="SMR" id="C8YUV0"/>
<dbReference type="STRING" id="9541.ENSMFAP00000029945"/>
<dbReference type="GlyCosmos" id="C8YUV0">
    <property type="glycosylation" value="1 site, No reported glycans"/>
</dbReference>
<dbReference type="Ensembl" id="ENSMFAT00000004151.2">
    <property type="protein sequence ID" value="ENSMFAP00000029948.1"/>
    <property type="gene ID" value="ENSMFAG00000042176.2"/>
</dbReference>
<dbReference type="GeneID" id="102136156"/>
<dbReference type="VEuPathDB" id="HostDB:ENSMFAG00000042176"/>
<dbReference type="eggNOG" id="KOG3656">
    <property type="taxonomic scope" value="Eukaryota"/>
</dbReference>
<dbReference type="GeneTree" id="ENSGT01130000278263"/>
<dbReference type="OMA" id="LYNMALF"/>
<dbReference type="Proteomes" id="UP000233100">
    <property type="component" value="Chromosome 9"/>
</dbReference>
<dbReference type="Bgee" id="ENSMFAG00000042176">
    <property type="expression patterns" value="Expressed in pituitary gland and 2 other cell types or tissues"/>
</dbReference>
<dbReference type="GO" id="GO:0060170">
    <property type="term" value="C:ciliary membrane"/>
    <property type="evidence" value="ECO:0007669"/>
    <property type="project" value="UniProtKB-SubCell"/>
</dbReference>
<dbReference type="GO" id="GO:0005929">
    <property type="term" value="C:cilium"/>
    <property type="evidence" value="ECO:0000250"/>
    <property type="project" value="UniProtKB"/>
</dbReference>
<dbReference type="GO" id="GO:0010008">
    <property type="term" value="C:endosome membrane"/>
    <property type="evidence" value="ECO:0007669"/>
    <property type="project" value="UniProtKB-SubCell"/>
</dbReference>
<dbReference type="GO" id="GO:0005765">
    <property type="term" value="C:lysosomal membrane"/>
    <property type="evidence" value="ECO:0007669"/>
    <property type="project" value="UniProtKB-SubCell"/>
</dbReference>
<dbReference type="GO" id="GO:0005886">
    <property type="term" value="C:plasma membrane"/>
    <property type="evidence" value="ECO:0000250"/>
    <property type="project" value="UniProtKB"/>
</dbReference>
<dbReference type="GO" id="GO:0005504">
    <property type="term" value="F:fatty acid binding"/>
    <property type="evidence" value="ECO:0000250"/>
    <property type="project" value="UniProtKB"/>
</dbReference>
<dbReference type="GO" id="GO:0004930">
    <property type="term" value="F:G protein-coupled receptor activity"/>
    <property type="evidence" value="ECO:0007669"/>
    <property type="project" value="UniProtKB-KW"/>
</dbReference>
<dbReference type="GO" id="GO:0007189">
    <property type="term" value="P:adenylate cyclase-activating G protein-coupled receptor signaling pathway"/>
    <property type="evidence" value="ECO:0000250"/>
    <property type="project" value="UniProtKB"/>
</dbReference>
<dbReference type="GO" id="GO:0050873">
    <property type="term" value="P:brown fat cell differentiation"/>
    <property type="evidence" value="ECO:0000250"/>
    <property type="project" value="UniProtKB"/>
</dbReference>
<dbReference type="GO" id="GO:0036321">
    <property type="term" value="P:ghrelin secretion"/>
    <property type="evidence" value="ECO:0000250"/>
    <property type="project" value="UniProtKB"/>
</dbReference>
<dbReference type="GO" id="GO:0006954">
    <property type="term" value="P:inflammatory response"/>
    <property type="evidence" value="ECO:0007669"/>
    <property type="project" value="UniProtKB-KW"/>
</dbReference>
<dbReference type="GO" id="GO:0043066">
    <property type="term" value="P:negative regulation of apoptotic process"/>
    <property type="evidence" value="ECO:0000250"/>
    <property type="project" value="UniProtKB"/>
</dbReference>
<dbReference type="GO" id="GO:0001818">
    <property type="term" value="P:negative regulation of cytokine production"/>
    <property type="evidence" value="ECO:0000250"/>
    <property type="project" value="UniProtKB"/>
</dbReference>
<dbReference type="GO" id="GO:0050728">
    <property type="term" value="P:negative regulation of inflammatory response"/>
    <property type="evidence" value="ECO:0000250"/>
    <property type="project" value="UniProtKB"/>
</dbReference>
<dbReference type="GO" id="GO:0090275">
    <property type="term" value="P:negative regulation of somatostatin secretion"/>
    <property type="evidence" value="ECO:0000250"/>
    <property type="project" value="UniProtKB"/>
</dbReference>
<dbReference type="GO" id="GO:0007200">
    <property type="term" value="P:phospholipase C-activating G protein-coupled receptor signaling pathway"/>
    <property type="evidence" value="ECO:0000250"/>
    <property type="project" value="UniProtKB"/>
</dbReference>
<dbReference type="GO" id="GO:0070374">
    <property type="term" value="P:positive regulation of ERK1 and ERK2 cascade"/>
    <property type="evidence" value="ECO:0000250"/>
    <property type="project" value="UniProtKB"/>
</dbReference>
<dbReference type="GO" id="GO:0070094">
    <property type="term" value="P:positive regulation of glucagon secretion"/>
    <property type="evidence" value="ECO:0000250"/>
    <property type="project" value="UniProtKB"/>
</dbReference>
<dbReference type="GO" id="GO:0045669">
    <property type="term" value="P:positive regulation of osteoblast differentiation"/>
    <property type="evidence" value="ECO:0000250"/>
    <property type="project" value="UniProtKB"/>
</dbReference>
<dbReference type="GO" id="GO:0010827">
    <property type="term" value="P:regulation of D-glucose transmembrane transport"/>
    <property type="evidence" value="ECO:0000250"/>
    <property type="project" value="UniProtKB"/>
</dbReference>
<dbReference type="GO" id="GO:0050872">
    <property type="term" value="P:white fat cell differentiation"/>
    <property type="evidence" value="ECO:0000250"/>
    <property type="project" value="UniProtKB"/>
</dbReference>
<dbReference type="CDD" id="cd00637">
    <property type="entry name" value="7tm_classA_rhodopsin-like"/>
    <property type="match status" value="1"/>
</dbReference>
<dbReference type="FunFam" id="1.20.1070.10:FF:000170">
    <property type="entry name" value="Free fatty acid receptor 4"/>
    <property type="match status" value="1"/>
</dbReference>
<dbReference type="Gene3D" id="1.20.1070.10">
    <property type="entry name" value="Rhodopsin 7-helix transmembrane proteins"/>
    <property type="match status" value="1"/>
</dbReference>
<dbReference type="InterPro" id="IPR000276">
    <property type="entry name" value="GPCR_Rhodpsn"/>
</dbReference>
<dbReference type="InterPro" id="IPR017452">
    <property type="entry name" value="GPCR_Rhodpsn_7TM"/>
</dbReference>
<dbReference type="PANTHER" id="PTHR45695:SF37">
    <property type="entry name" value="FREE FATTY ACID RECEPTOR 4-LIKE"/>
    <property type="match status" value="1"/>
</dbReference>
<dbReference type="PANTHER" id="PTHR45695">
    <property type="entry name" value="LEUCOKININ RECEPTOR-RELATED"/>
    <property type="match status" value="1"/>
</dbReference>
<dbReference type="Pfam" id="PF00001">
    <property type="entry name" value="7tm_1"/>
    <property type="match status" value="1"/>
</dbReference>
<dbReference type="PRINTS" id="PR00237">
    <property type="entry name" value="GPCRRHODOPSN"/>
</dbReference>
<dbReference type="SUPFAM" id="SSF81321">
    <property type="entry name" value="Family A G protein-coupled receptor-like"/>
    <property type="match status" value="1"/>
</dbReference>
<dbReference type="PROSITE" id="PS50262">
    <property type="entry name" value="G_PROTEIN_RECEP_F1_2"/>
    <property type="match status" value="1"/>
</dbReference>
<organism>
    <name type="scientific">Macaca fascicularis</name>
    <name type="common">Crab-eating macaque</name>
    <name type="synonym">Cynomolgus monkey</name>
    <dbReference type="NCBI Taxonomy" id="9541"/>
    <lineage>
        <taxon>Eukaryota</taxon>
        <taxon>Metazoa</taxon>
        <taxon>Chordata</taxon>
        <taxon>Craniata</taxon>
        <taxon>Vertebrata</taxon>
        <taxon>Euteleostomi</taxon>
        <taxon>Mammalia</taxon>
        <taxon>Eutheria</taxon>
        <taxon>Euarchontoglires</taxon>
        <taxon>Primates</taxon>
        <taxon>Haplorrhini</taxon>
        <taxon>Catarrhini</taxon>
        <taxon>Cercopithecidae</taxon>
        <taxon>Cercopithecinae</taxon>
        <taxon>Macaca</taxon>
    </lineage>
</organism>
<evidence type="ECO:0000250" key="1">
    <source>
        <dbReference type="UniProtKB" id="Q5NUL3"/>
    </source>
</evidence>
<evidence type="ECO:0000250" key="2">
    <source>
        <dbReference type="UniProtKB" id="Q7TMA4"/>
    </source>
</evidence>
<evidence type="ECO:0000255" key="3"/>
<evidence type="ECO:0000255" key="4">
    <source>
        <dbReference type="PROSITE-ProRule" id="PRU00521"/>
    </source>
</evidence>
<evidence type="ECO:0000269" key="5">
    <source>
    </source>
</evidence>
<feature type="chain" id="PRO_0000403958" description="Free fatty acid receptor 4">
    <location>
        <begin position="1"/>
        <end position="361"/>
    </location>
</feature>
<feature type="topological domain" description="Extracellular" evidence="3">
    <location>
        <begin position="1"/>
        <end position="45"/>
    </location>
</feature>
<feature type="transmembrane region" description="Helical; Name=1" evidence="3">
    <location>
        <begin position="46"/>
        <end position="66"/>
    </location>
</feature>
<feature type="topological domain" description="Cytoplasmic" evidence="3">
    <location>
        <begin position="67"/>
        <end position="77"/>
    </location>
</feature>
<feature type="transmembrane region" description="Helical; Name=2" evidence="3">
    <location>
        <begin position="78"/>
        <end position="98"/>
    </location>
</feature>
<feature type="topological domain" description="Extracellular" evidence="3">
    <location>
        <begin position="99"/>
        <end position="112"/>
    </location>
</feature>
<feature type="transmembrane region" description="Helical; Name=3" evidence="3">
    <location>
        <begin position="113"/>
        <end position="133"/>
    </location>
</feature>
<feature type="topological domain" description="Cytoplasmic" evidence="3">
    <location>
        <begin position="134"/>
        <end position="156"/>
    </location>
</feature>
<feature type="transmembrane region" description="Helical; Name=4" evidence="3">
    <location>
        <begin position="157"/>
        <end position="177"/>
    </location>
</feature>
<feature type="topological domain" description="Extracellular" evidence="3">
    <location>
        <begin position="178"/>
        <end position="204"/>
    </location>
</feature>
<feature type="transmembrane region" description="Helical; Name=5" evidence="3">
    <location>
        <begin position="205"/>
        <end position="225"/>
    </location>
</feature>
<feature type="topological domain" description="Cytoplasmic" evidence="3">
    <location>
        <begin position="226"/>
        <end position="268"/>
    </location>
</feature>
<feature type="transmembrane region" description="Helical; Name=6" evidence="3">
    <location>
        <begin position="269"/>
        <end position="289"/>
    </location>
</feature>
<feature type="topological domain" description="Extracellular" evidence="3">
    <location>
        <begin position="290"/>
        <end position="295"/>
    </location>
</feature>
<feature type="transmembrane region" description="Helical; Name=7" evidence="3">
    <location>
        <begin position="296"/>
        <end position="316"/>
    </location>
</feature>
<feature type="topological domain" description="Cytoplasmic" evidence="3">
    <location>
        <begin position="317"/>
        <end position="361"/>
    </location>
</feature>
<feature type="modified residue" description="Phosphothreonine" evidence="1">
    <location>
        <position position="347"/>
    </location>
</feature>
<feature type="modified residue" description="Phosphothreonine" evidence="1">
    <location>
        <position position="349"/>
    </location>
</feature>
<feature type="modified residue" description="Phosphoserine" evidence="1">
    <location>
        <position position="350"/>
    </location>
</feature>
<feature type="modified residue" description="Phosphoserine" evidence="1">
    <location>
        <position position="357"/>
    </location>
</feature>
<feature type="modified residue" description="Phosphoserine" evidence="1">
    <location>
        <position position="360"/>
    </location>
</feature>
<feature type="glycosylation site" description="N-linked (GlcNAc...) asparagine" evidence="3">
    <location>
        <position position="21"/>
    </location>
</feature>
<feature type="disulfide bond" evidence="4">
    <location>
        <begin position="111"/>
        <end position="194"/>
    </location>
</feature>
<accession>C8YUV0</accession>
<comment type="function">
    <text evidence="1 2">G-protein-coupled receptor for long-chain fatty acids (LCFAs) with a major role in adipogenesis, energy metabolism and inflammation. Signals via G-protein and beta-arrestin pathways. LCFAs sensing initiates activation of phosphoinositidase C-linked G proteins GNAQ and GNA11 (G(q)/G(11)), inducing a variety of cellular responses via second messenger pathways such as intracellular calcium mobilization, modulation of cyclic adenosine monophosphate (cAMP) production, and mitogen-activated protein kinases (MAPKs). After LCFAs binding, associates with beta-arrestin ARRB2 that acts as an adapter protein coupling the receptor to specific downstream signaling pathways, as well as mediating receptor endocytosis (By similarity). In response to dietary fats, plays an important role in the regulation of adipocyte proliferation and differentiation. Acts as a receptor for omega-3 polyunsaturated fatty acids (PUFAs) at primary cilium of perivascular preadipocytes, initiating an adipogenic program via cAMP and CTCF-dependent chromatin remodeling that ultimately results in transcriptional activation of adipogenic genes and cell cycle entry. Induces differentiation of brown and beige adipocytes probably via autocrine and endocrine functions of FGF21 hormone. Contributes to the thermogenic activation of brown adipose tissue and the browning of white adipose tissue. Activates brown adipocytes by initiating intracellular calcium signaling leading to mitochondrial depolarization and fission, and overall increased mitochondrial respiration. Consequently stimulates fatty acid uptake and oxidation in mitochondria together with UCP1-mediated thermogenic respiration, eventually reducing fat mass. Regulates bi-potential differentiation of bone marrow mesenchymal stem cells toward osteoblasts or adipocytes likely by up-regulating distinct integrins. In response to dietary fats regulates hormone secretion and appetite. Stimulates GIP and GLP1 secretion from enteroendocrine cells as well as GCG secretion in pancreatic alpha cells, thereby playing a role in the regulation of blood glucose levels. Negatively regulates glucose-induced SST secretion in pancreatic delta cells. Mediates LCFAs inhibition of GHRL secretion, an appetite-controlling hormone. In taste buds, contributes to sensing of dietary fatty acids by the gustatory system. During the inflammatory response, promotes anti-inflammatory M2 macrophage differentiation in adipose tissue (By similarity). Mediates the anti-inflammatory effects of omega-3 PUFAs via inhibition of NLRP3 inflammasome activation (By similarity). In this pathway, interacts with adapter protein ARRB2 and inhibits the priming step triggered by Toll-like receptors (TLRs) at the level of TAK1 and TAB1 (By similarity). Further inhibits the activation step when ARRB2 directly associates with NLRP3, leading to inhibition of pro-inflammatory cytokine release (By similarity). Mediates LCFAs anti-apoptotic effects (By similarity).</text>
</comment>
<comment type="subunit">
    <text evidence="1">Interacts (via C-terminus) with ARRB2 following LCFAs stimulation.</text>
</comment>
<comment type="subcellular location">
    <subcellularLocation>
        <location evidence="2">Cell membrane</location>
        <topology evidence="3">Multi-pass membrane protein</topology>
    </subcellularLocation>
    <subcellularLocation>
        <location evidence="1">Endosome membrane</location>
        <topology evidence="3">Multi-pass membrane protein</topology>
    </subcellularLocation>
    <subcellularLocation>
        <location evidence="1">Lysosome membrane</location>
        <topology evidence="3">Multi-pass membrane protein</topology>
    </subcellularLocation>
    <subcellularLocation>
        <location evidence="2">Cell projection</location>
        <location evidence="2">Cilium membrane</location>
        <topology evidence="3">Multi-pass membrane protein</topology>
    </subcellularLocation>
    <text evidence="1 2">Sorted to late endosome/lysosome compartments upon internalization (By similarity). Specifically localizes to the primary cilium of undifferentiated adipocytes. Ciliary trafficking is TULP3-dependent. As the cilium is lost during adipogenesis, moves to the plasma membrane (By similarity).</text>
</comment>
<comment type="tissue specificity">
    <text evidence="5">Highly expressed in lung and colon.</text>
</comment>
<comment type="PTM">
    <text evidence="1">Phosphorylated at two clusters of Ser and Thr residues located in the intracellular C-terminus. Prerequisite for FFAR4 internalization via an ARRB2-dependent pathway.</text>
</comment>
<comment type="similarity">
    <text evidence="4">Belongs to the G-protein coupled receptor 1 family.</text>
</comment>
<reference key="1">
    <citation type="journal article" date="2009" name="Comp. Biochem. Physiol.">
        <title>Cloning, expression, and pharmacological characterization of the GPR120 free fatty acid receptor from cynomolgus monkey: comparison with human GPR120 splice variants.</title>
        <authorList>
            <person name="Moore K."/>
            <person name="Zhang Q."/>
            <person name="Murgolo N."/>
            <person name="Hosted T."/>
            <person name="Duffy R."/>
        </authorList>
    </citation>
    <scope>NUCLEOTIDE SEQUENCE [MRNA]</scope>
    <scope>TISSUE SPECIFICITY</scope>
    <source>
        <tissue>Colon</tissue>
    </source>
</reference>
<proteinExistence type="evidence at transcript level"/>
<protein>
    <recommendedName>
        <fullName>Free fatty acid receptor 4</fullName>
    </recommendedName>
    <alternativeName>
        <fullName>G-protein coupled receptor 120</fullName>
    </alternativeName>
    <alternativeName>
        <fullName>Omega-3 fatty acid receptor 1</fullName>
    </alternativeName>
</protein>
<name>FFAR4_MACFA</name>
<keyword id="KW-1003">Cell membrane</keyword>
<keyword id="KW-0966">Cell projection</keyword>
<keyword id="KW-0221">Differentiation</keyword>
<keyword id="KW-1015">Disulfide bond</keyword>
<keyword id="KW-0967">Endosome</keyword>
<keyword id="KW-0297">G-protein coupled receptor</keyword>
<keyword id="KW-0325">Glycoprotein</keyword>
<keyword id="KW-0395">Inflammatory response</keyword>
<keyword id="KW-0446">Lipid-binding</keyword>
<keyword id="KW-0458">Lysosome</keyword>
<keyword id="KW-0472">Membrane</keyword>
<keyword id="KW-0597">Phosphoprotein</keyword>
<keyword id="KW-0675">Receptor</keyword>
<keyword id="KW-1185">Reference proteome</keyword>
<keyword id="KW-0807">Transducer</keyword>
<keyword id="KW-0812">Transmembrane</keyword>
<keyword id="KW-1133">Transmembrane helix</keyword>
<sequence>MSPECARAAGDAPLRSLEQANRTRFSFFSDVKGDHRLLLAAVETTVLALIFAVSLLGNVCALVLVARRRRRGTTACLVLNLFCADLLFISAIPLVLAVRWTEAWLLGPVACHLLFYLMTLSGSVTILTLAAVSLERMVCIVHLQRGVRGPGRRARAVLLTLIWGYSAVAALPLCVFFRVVPQRLPGADQEISICTLIWPTIAGEISWDVSFVTLNFLVPGLVIVISYSKILQITKASRKRLTVSLAYSESHQIRVSQQDFRLFRTLFLLMVSFFIMWSPIIITILLILIQNFKQDLVIWPSLFFWVVAFTFANSALNPILYNMTLCRNEWKKIFCCFWFPEKGAILTDTSVKRNDLSVISG</sequence>
<gene>
    <name type="primary">FFAR4</name>
    <name type="synonym">GPR120</name>
    <name type="synonym">O3FAR1</name>
</gene>